<evidence type="ECO:0000250" key="1">
    <source>
        <dbReference type="UniProtKB" id="P0C248"/>
    </source>
</evidence>
<evidence type="ECO:0000250" key="2">
    <source>
        <dbReference type="UniProtKB" id="P0C250"/>
    </source>
</evidence>
<evidence type="ECO:0000250" key="3">
    <source>
        <dbReference type="UniProtKB" id="P62903"/>
    </source>
</evidence>
<evidence type="ECO:0000250" key="4">
    <source>
        <dbReference type="UniProtKB" id="P83047"/>
    </source>
</evidence>
<evidence type="ECO:0000269" key="5">
    <source>
    </source>
</evidence>
<evidence type="ECO:0000303" key="6">
    <source>
    </source>
</evidence>
<evidence type="ECO:0000305" key="7"/>
<evidence type="ECO:0000305" key="8">
    <source>
    </source>
</evidence>
<sequence>CFISDCAPG</sequence>
<organism>
    <name type="scientific">Conus leopardus</name>
    <name type="common">Leopard cone</name>
    <dbReference type="NCBI Taxonomy" id="101306"/>
    <lineage>
        <taxon>Eukaryota</taxon>
        <taxon>Metazoa</taxon>
        <taxon>Spiralia</taxon>
        <taxon>Lophotrochozoa</taxon>
        <taxon>Mollusca</taxon>
        <taxon>Gastropoda</taxon>
        <taxon>Caenogastropoda</taxon>
        <taxon>Neogastropoda</taxon>
        <taxon>Conoidea</taxon>
        <taxon>Conidae</taxon>
        <taxon>Conus</taxon>
        <taxon>Lithoconus</taxon>
    </lineage>
</organism>
<dbReference type="GO" id="GO:0005576">
    <property type="term" value="C:extracellular region"/>
    <property type="evidence" value="ECO:0007669"/>
    <property type="project" value="UniProtKB-SubCell"/>
</dbReference>
<dbReference type="GO" id="GO:0099106">
    <property type="term" value="F:ion channel regulator activity"/>
    <property type="evidence" value="ECO:0007669"/>
    <property type="project" value="UniProtKB-KW"/>
</dbReference>
<dbReference type="GO" id="GO:0090729">
    <property type="term" value="F:toxin activity"/>
    <property type="evidence" value="ECO:0007669"/>
    <property type="project" value="UniProtKB-KW"/>
</dbReference>
<name>COW_CONLE</name>
<proteinExistence type="evidence at protein level"/>
<keyword id="KW-0027">Amidation</keyword>
<keyword id="KW-0903">Direct protein sequencing</keyword>
<keyword id="KW-1015">Disulfide bond</keyword>
<keyword id="KW-0379">Hydroxylation</keyword>
<keyword id="KW-0872">Ion channel impairing toxin</keyword>
<keyword id="KW-0964">Secreted</keyword>
<keyword id="KW-0800">Toxin</keyword>
<reference key="1">
    <citation type="journal article" date="2017" name="Toxicon">
        <title>Identification of short single disulfide-containing contryphans from the venom of cone snails using de novo mass spectrometry-based sequencing methods.</title>
        <authorList>
            <person name="Franklin J.B."/>
            <person name="Rajesh R.P."/>
            <person name="Vinithkumar N.V."/>
            <person name="Kirubagaran R."/>
        </authorList>
    </citation>
    <scope>PROTEIN SEQUENCE</scope>
    <scope>SUBCELLULAR LOCATION</scope>
    <scope>MASS SPECTROMETRY</scope>
    <scope>AMIDATION AT PRO-8</scope>
    <scope>HYDROXYLATION AT PRO-8</scope>
    <scope>DISULFIDE BOND</scope>
    <source>
        <tissue>Venom</tissue>
    </source>
</reference>
<comment type="function">
    <text evidence="1 2 3 4">Its target is unknown, but this toxin may modulate voltage-activated calcium channels (Cav) or calcium-dependent potassium channels (KCa).</text>
</comment>
<comment type="subcellular location">
    <subcellularLocation>
        <location evidence="5">Secreted</location>
    </subcellularLocation>
</comment>
<comment type="tissue specificity">
    <text evidence="8">Expressed by the venom duct.</text>
</comment>
<comment type="domain">
    <text evidence="7">The cysteine framework is C-C.</text>
</comment>
<comment type="mass spectrometry">
    <molecule>Contryphan Le925</molecule>
    <text>Average mass.</text>
</comment>
<comment type="mass spectrometry">
    <molecule>Contryphan Le851</molecule>
    <text>Average mass.</text>
</comment>
<comment type="mass spectrometry">
    <molecule>Contryphan Le755</molecule>
    <text>Average mass.</text>
</comment>
<comment type="mass spectrometry">
    <molecule>Contryphan Le685</molecule>
    <text>Average mass.</text>
</comment>
<comment type="similarity">
    <text evidence="7">Belongs to the O2 superfamily. Contryphan family.</text>
</comment>
<protein>
    <recommendedName>
        <fullName evidence="6">Contryphan Le925</fullName>
    </recommendedName>
    <component>
        <recommendedName>
            <fullName evidence="6">Contryphan Le851</fullName>
        </recommendedName>
    </component>
    <component>
        <recommendedName>
            <fullName evidence="6">Contryphan Le755</fullName>
        </recommendedName>
    </component>
    <component>
        <recommendedName>
            <fullName evidence="6">Contryphan Le685</fullName>
        </recommendedName>
    </component>
</protein>
<accession>P0DUC3</accession>
<feature type="peptide" id="PRO_0000451474" description="Contryphan Le925" evidence="5">
    <location>
        <begin position="1"/>
        <end position="9"/>
    </location>
</feature>
<feature type="peptide" id="PRO_0000451475" description="Contryphan Le851" evidence="5">
    <location>
        <begin position="1"/>
        <end position="8"/>
    </location>
</feature>
<feature type="peptide" id="PRO_0000451476" description="Contryphan Le755" evidence="5">
    <location>
        <begin position="1"/>
        <end position="7"/>
    </location>
</feature>
<feature type="peptide" id="PRO_0000451477" description="Contryphan Le685" evidence="5">
    <location>
        <begin position="1"/>
        <end position="6"/>
    </location>
</feature>
<feature type="modified residue" description="4-hydroxyproline; in Contryphan Le925" evidence="5">
    <location>
        <position position="8"/>
    </location>
</feature>
<feature type="modified residue" description="Proline amide; in Contryphan Le851" evidence="5">
    <location>
        <position position="8"/>
    </location>
</feature>
<feature type="disulfide bond" evidence="5">
    <location>
        <begin position="1"/>
        <end position="6"/>
    </location>
</feature>
<feature type="unsure residue" description="I or L" evidence="5">
    <location>
        <position position="3"/>
    </location>
</feature>